<sequence length="422" mass="44139">MTKDFKISVSAALISALFSSPYAFANNDEVHFTAVQISPNADPDSHVVIFQPAAEALGGTNALAKSIHSIAVGASAEAAKQAAVAVGAGSIATGVNSVAIGPLSKALGDSAVTYGAASTAQKDGVAIGARAFTSDTGVAVGFNSKVDAKNSVAIGHSSHVAVDHDYSIAIGDRSKTDRKNSVSIGHESLNRQLTHLAAGTKDTDAVNVAQLKKEIEKTQVNANKKSAEVLGIANNYTDSKSAETLENARKEAFDLSNDALDMAKKHSNSVARTTLETAEEHTNKKSAETLARANVYADSKSSHTLQTANSYTDVTVSNSTKKAIRESNQYTDHKFRQLDNRLDKLDTRVDKGLASSAALNSLFQPYGVGKVNFTAGVGGYRSSQALAIGSGYRVNESVALKAGVAYAGSSDVMYNASFNIEW</sequence>
<feature type="signal peptide" evidence="2">
    <location>
        <begin position="1"/>
        <end position="25"/>
    </location>
</feature>
<feature type="chain" id="PRO_0000285834" description="Adhesin YadA">
    <location>
        <begin position="26"/>
        <end position="422"/>
    </location>
</feature>
<feature type="transmembrane region" description="Beta stranded" evidence="10 11">
    <location>
        <begin position="369"/>
        <end position="379"/>
    </location>
</feature>
<feature type="transmembrane region" description="Beta stranded" evidence="10 11">
    <location>
        <begin position="383"/>
        <end position="394"/>
    </location>
</feature>
<feature type="transmembrane region" description="Beta stranded" evidence="10 11">
    <location>
        <begin position="401"/>
        <end position="407"/>
    </location>
</feature>
<feature type="transmembrane region" description="Beta stranded" evidence="10 11">
    <location>
        <begin position="411"/>
        <end position="422"/>
    </location>
</feature>
<feature type="region of interest" description="Surface exposed passenger domain" evidence="10">
    <location>
        <begin position="26"/>
        <end position="330"/>
    </location>
</feature>
<feature type="region of interest" description="Outer membrane translocation of the passenger domain" evidence="10">
    <location>
        <begin position="331"/>
        <end position="368"/>
    </location>
</feature>
<feature type="region of interest" description="Translocator domain" evidence="10">
    <location>
        <begin position="369"/>
        <end position="422"/>
    </location>
</feature>
<feature type="coiled-coil region" evidence="2">
    <location>
        <begin position="206"/>
        <end position="236"/>
    </location>
</feature>
<feature type="mutagenesis site" description="Full-length protein behaves like wild-type, the membrane anchor domain (residues 335-422) trimerizes poorly." evidence="3">
    <original>G</original>
    <variation>A</variation>
    <location>
        <position position="389"/>
    </location>
</feature>
<feature type="mutagenesis site" description="Loss of resistance to serum complement, loss of autoagglutination, still expressed on bacteria surface, still binds HeLa cells, weakly forms trimers that dissociate fully upon heating, a membrane anchor domain (residues 335-422) cannot be isolated." evidence="3">
    <original>G</original>
    <variation>H</variation>
    <variation>N</variation>
    <variation>T</variation>
    <location>
        <position position="389"/>
    </location>
</feature>
<feature type="mutagenesis site" description="Forms trimers that dissociate fully upon heating, the membrane anchor domain (residues 335-422) trimerizes very poorly." evidence="3">
    <original>G</original>
    <variation>S</variation>
    <location>
        <position position="389"/>
    </location>
</feature>
<feature type="sequence conflict" description="In Ref. 1; CAA32085." evidence="8" ref="1">
    <original>T</original>
    <variation>P</variation>
    <location>
        <position position="282"/>
    </location>
</feature>
<feature type="helix" evidence="12">
    <location>
        <begin position="333"/>
        <end position="360"/>
    </location>
</feature>
<feature type="strand" evidence="12">
    <location>
        <begin position="368"/>
        <end position="380"/>
    </location>
</feature>
<feature type="strand" evidence="12">
    <location>
        <begin position="383"/>
        <end position="398"/>
    </location>
</feature>
<feature type="strand" evidence="12">
    <location>
        <begin position="401"/>
        <end position="407"/>
    </location>
</feature>
<feature type="turn" evidence="12">
    <location>
        <begin position="408"/>
        <end position="410"/>
    </location>
</feature>
<feature type="strand" evidence="12">
    <location>
        <begin position="411"/>
        <end position="422"/>
    </location>
</feature>
<comment type="function">
    <text evidence="1 3 9">Collagen-binding outer membrane protein forming a fibrillar matrix on the bacterial cell surface and phagocytosis resistance (By similarity). Promotes initial attachment and invasion of eukaryotic cells (Probable). Also protects the bacteria by being responsible for agglutination, serum resistance and complement inactivation. Gly-389 plays an important role in this protein; replacing it with increasingly large polar residues decreases expression levels and trimer stability. Residues larger than Ser (Thr, Asn or His) significantly decrease serume resistance and bacterial autoagglution without affecting adhesion to host cells or host cell cytokine production (PubMed:17921300).</text>
</comment>
<comment type="subunit">
    <text evidence="3 4">Homotrimer; trimers are very stable, not disrupted by heating at 95 degrees Celsius for 10 minutes in SDS sample buffer.</text>
</comment>
<comment type="subcellular location">
    <subcellularLocation>
        <location evidence="3 10">Cell surface</location>
    </subcellularLocation>
    <subcellularLocation>
        <location evidence="3 10">Cell outer membrane</location>
    </subcellularLocation>
    <text evidence="10">The C-terminal translocator domain is localized in the outer membrane and the passenger domain is at the cell surface.</text>
</comment>
<comment type="domain">
    <text evidence="10">The signal peptide, cleaved at the inner membrane, guides the autotransporter protein to the periplasmic space. Then, insertion of the trimerized C-terminal translocator domain in the outer membrane forms a hydrophilic pore for the translocation of the passenger domain to the bacterial cell surface. The passenger domain is probably exported as a hairpin structure, with all 3 strands of the trimer in the pore simultaneously.</text>
</comment>
<comment type="miscellaneous">
    <text evidence="3">Expression of mutant proteins in E.coli is improved in a degP deletion, suggesting the mutants are susceptible to degradation in the periplasm.</text>
</comment>
<comment type="similarity">
    <text evidence="8">Belongs to the autotransporter-2 (AT-2) (TC 1.B.40) family.</text>
</comment>
<dbReference type="EMBL" id="X13881">
    <property type="protein sequence ID" value="CAA32085.1"/>
    <property type="molecule type" value="Genomic_DNA"/>
</dbReference>
<dbReference type="EMBL" id="AF336309">
    <property type="protein sequence ID" value="AAK69254.1"/>
    <property type="molecule type" value="Genomic_DNA"/>
</dbReference>
<dbReference type="EMBL" id="AM286416">
    <property type="protein sequence ID" value="CAL10087.1"/>
    <property type="molecule type" value="Genomic_DNA"/>
</dbReference>
<dbReference type="PIR" id="S04911">
    <property type="entry name" value="S04911"/>
</dbReference>
<dbReference type="RefSeq" id="NP_863557.1">
    <property type="nucleotide sequence ID" value="NC_005017.1"/>
</dbReference>
<dbReference type="RefSeq" id="WP_011117647.1">
    <property type="nucleotide sequence ID" value="NC_008791.1"/>
</dbReference>
<dbReference type="RefSeq" id="YP_001004112.1">
    <property type="nucleotide sequence ID" value="NC_008791.1"/>
</dbReference>
<dbReference type="PDB" id="2LME">
    <property type="method" value="NMR"/>
    <property type="chains" value="A/B/C=333-422"/>
</dbReference>
<dbReference type="PDBsum" id="2LME"/>
<dbReference type="BMRB" id="A1JUB7"/>
<dbReference type="SMR" id="A1JUB7"/>
<dbReference type="KEGG" id="yen:YEP0066"/>
<dbReference type="PATRIC" id="fig|393305.7.peg.65"/>
<dbReference type="eggNOG" id="COG1293">
    <property type="taxonomic scope" value="Bacteria"/>
</dbReference>
<dbReference type="eggNOG" id="COG5295">
    <property type="taxonomic scope" value="Bacteria"/>
</dbReference>
<dbReference type="HOGENOM" id="CLU_046286_0_0_6"/>
<dbReference type="OrthoDB" id="1631723at2"/>
<dbReference type="EvolutionaryTrace" id="A1JUB7"/>
<dbReference type="PRO" id="PR:A1JUB7"/>
<dbReference type="Proteomes" id="UP000000642">
    <property type="component" value="Plasmid pYVe8081"/>
</dbReference>
<dbReference type="GO" id="GO:0009279">
    <property type="term" value="C:cell outer membrane"/>
    <property type="evidence" value="ECO:0007669"/>
    <property type="project" value="UniProtKB-SubCell"/>
</dbReference>
<dbReference type="GO" id="GO:0009986">
    <property type="term" value="C:cell surface"/>
    <property type="evidence" value="ECO:0007669"/>
    <property type="project" value="UniProtKB-SubCell"/>
</dbReference>
<dbReference type="GO" id="GO:0005518">
    <property type="term" value="F:collagen binding"/>
    <property type="evidence" value="ECO:0007669"/>
    <property type="project" value="InterPro"/>
</dbReference>
<dbReference type="GO" id="GO:0007155">
    <property type="term" value="P:cell adhesion"/>
    <property type="evidence" value="ECO:0007669"/>
    <property type="project" value="UniProtKB-KW"/>
</dbReference>
<dbReference type="GO" id="GO:0015031">
    <property type="term" value="P:protein transport"/>
    <property type="evidence" value="ECO:0007669"/>
    <property type="project" value="UniProtKB-KW"/>
</dbReference>
<dbReference type="CDD" id="cd12820">
    <property type="entry name" value="LbR_YadA-like"/>
    <property type="match status" value="1"/>
</dbReference>
<dbReference type="Gene3D" id="3.30.1300.30">
    <property type="entry name" value="GSPII I/J protein-like"/>
    <property type="match status" value="1"/>
</dbReference>
<dbReference type="Gene3D" id="2.150.10.10">
    <property type="entry name" value="Serralysin-like metalloprotease, C-terminal"/>
    <property type="match status" value="1"/>
</dbReference>
<dbReference type="InterPro" id="IPR008640">
    <property type="entry name" value="Adhesin_Head_dom"/>
</dbReference>
<dbReference type="InterPro" id="IPR008635">
    <property type="entry name" value="Coiled_stalk_dom"/>
</dbReference>
<dbReference type="InterPro" id="IPR008126">
    <property type="entry name" value="OM_adhesion_Yersinia"/>
</dbReference>
<dbReference type="InterPro" id="IPR045584">
    <property type="entry name" value="Pilin-like"/>
</dbReference>
<dbReference type="InterPro" id="IPR011049">
    <property type="entry name" value="Serralysin-like_metalloprot_C"/>
</dbReference>
<dbReference type="InterPro" id="IPR005594">
    <property type="entry name" value="YadA_C"/>
</dbReference>
<dbReference type="NCBIfam" id="NF033478">
    <property type="entry name" value="YadA_autotrans"/>
    <property type="match status" value="1"/>
</dbReference>
<dbReference type="Pfam" id="PF03895">
    <property type="entry name" value="YadA_anchor"/>
    <property type="match status" value="1"/>
</dbReference>
<dbReference type="Pfam" id="PF05658">
    <property type="entry name" value="YadA_head"/>
    <property type="match status" value="5"/>
</dbReference>
<dbReference type="Pfam" id="PF05662">
    <property type="entry name" value="YadA_stalk"/>
    <property type="match status" value="1"/>
</dbReference>
<dbReference type="PRINTS" id="PR01756">
    <property type="entry name" value="OMADHESIN"/>
</dbReference>
<dbReference type="SUPFAM" id="SSF101967">
    <property type="entry name" value="Adhesin YadA, collagen-binding domain"/>
    <property type="match status" value="1"/>
</dbReference>
<dbReference type="SUPFAM" id="SSF54523">
    <property type="entry name" value="Pili subunits"/>
    <property type="match status" value="1"/>
</dbReference>
<evidence type="ECO:0000250" key="1">
    <source>
        <dbReference type="UniProtKB" id="P0C2W0"/>
    </source>
</evidence>
<evidence type="ECO:0000255" key="2"/>
<evidence type="ECO:0000269" key="3">
    <source>
    </source>
</evidence>
<evidence type="ECO:0000269" key="4">
    <source>
    </source>
</evidence>
<evidence type="ECO:0000303" key="5">
    <source>
    </source>
</evidence>
<evidence type="ECO:0000303" key="6">
    <source>
    </source>
</evidence>
<evidence type="ECO:0000303" key="7">
    <source>
    </source>
</evidence>
<evidence type="ECO:0000305" key="8"/>
<evidence type="ECO:0000305" key="9">
    <source>
    </source>
</evidence>
<evidence type="ECO:0000305" key="10">
    <source>
    </source>
</evidence>
<evidence type="ECO:0007744" key="11">
    <source>
        <dbReference type="PDB" id="2LME"/>
    </source>
</evidence>
<evidence type="ECO:0007829" key="12">
    <source>
        <dbReference type="PDB" id="2LME"/>
    </source>
</evidence>
<keyword id="KW-0002">3D-structure</keyword>
<keyword id="KW-0130">Cell adhesion</keyword>
<keyword id="KW-0998">Cell outer membrane</keyword>
<keyword id="KW-0175">Coiled coil</keyword>
<keyword id="KW-0472">Membrane</keyword>
<keyword id="KW-0614">Plasmid</keyword>
<keyword id="KW-0653">Protein transport</keyword>
<keyword id="KW-0732">Signal</keyword>
<keyword id="KW-0812">Transmembrane</keyword>
<keyword id="KW-1134">Transmembrane beta strand</keyword>
<keyword id="KW-0813">Transport</keyword>
<keyword id="KW-0843">Virulence</keyword>
<name>YADA_YERE8</name>
<reference key="1">
    <citation type="journal article" date="1989" name="Mol. Microbiol.">
        <title>Analysis of the yopA gene encoding the Yop1 virulence determinants of Yersinia spp.</title>
        <authorList>
            <person name="Skurnik M."/>
            <person name="Wolf-Watz H."/>
        </authorList>
    </citation>
    <scope>NUCLEOTIDE SEQUENCE [GENOMIC DNA]</scope>
    <source>
        <strain>NCTC 13174 / 8081</strain>
        <plasmid>pYVe8081</plasmid>
    </source>
</reference>
<reference key="2">
    <citation type="journal article" date="2001" name="Infect. Immun.">
        <title>Complete DNA sequence of Yersinia enterocolitica serotype 0:8 low-calcium-response plasmid reveals a new virulence plasmid-associated replicon.</title>
        <authorList>
            <person name="Snellings N.J."/>
            <person name="Popek M."/>
            <person name="Lindler L.E."/>
        </authorList>
    </citation>
    <scope>NUCLEOTIDE SEQUENCE [GENOMIC DNA]</scope>
    <source>
        <strain>NCTC 13174 / 8081</strain>
        <plasmid>pYVe8081</plasmid>
    </source>
</reference>
<reference key="3">
    <citation type="journal article" date="2006" name="PLoS Genet.">
        <title>The complete genome sequence and comparative genome analysis of the high pathogenicity Yersinia enterocolitica strain 8081.</title>
        <authorList>
            <person name="Thomson N.R."/>
            <person name="Howard S."/>
            <person name="Wren B.W."/>
            <person name="Holden M.T.G."/>
            <person name="Crossman L."/>
            <person name="Challis G.L."/>
            <person name="Churcher C."/>
            <person name="Mungall K."/>
            <person name="Brooks K."/>
            <person name="Chillingworth T."/>
            <person name="Feltwell T."/>
            <person name="Abdellah Z."/>
            <person name="Hauser H."/>
            <person name="Jagels K."/>
            <person name="Maddison M."/>
            <person name="Moule S."/>
            <person name="Sanders M."/>
            <person name="Whitehead S."/>
            <person name="Quail M.A."/>
            <person name="Dougan G."/>
            <person name="Parkhill J."/>
            <person name="Prentice M.B."/>
        </authorList>
    </citation>
    <scope>NUCLEOTIDE SEQUENCE [LARGE SCALE GENOMIC DNA]</scope>
    <source>
        <strain>NCTC 13174 / 8081</strain>
    </source>
</reference>
<reference key="4">
    <citation type="journal article" date="2007" name="J. Bacteriol.">
        <title>A conserved glycine residue of trimeric autotransporter domains plays a key role in Yersinia adhesin A autotransport.</title>
        <authorList>
            <person name="Grosskinsky U."/>
            <person name="Schuetz M."/>
            <person name="Fritz M."/>
            <person name="Schmid Y."/>
            <person name="Lamparter M.C."/>
            <person name="Szczesny P."/>
            <person name="Lupas A.N."/>
            <person name="Autenrieth I.B."/>
            <person name="Linke D."/>
        </authorList>
    </citation>
    <scope>FUNCTION</scope>
    <scope>EXPRESSION IN E.COLI</scope>
    <scope>SUBUNIT</scope>
    <scope>SUBCELLULAR LOCATION</scope>
    <scope>MUTAGENESIS OF GLY-389</scope>
</reference>
<reference evidence="11" key="5">
    <citation type="journal article" date="2012" name="Nat. Methods">
        <title>Membrane-protein structure determination by solid-state NMR spectroscopy of microcrystals.</title>
        <authorList>
            <person name="Shahid S.A."/>
            <person name="Bardiaux B."/>
            <person name="Franks W.T."/>
            <person name="Krabben L."/>
            <person name="Habeck M."/>
            <person name="van Rossum B.J."/>
            <person name="Linke D."/>
        </authorList>
    </citation>
    <scope>STRUCTURE BY NMR OF 333-422</scope>
    <scope>SUBUNIT</scope>
    <scope>SUBCELLULAR LOCATION</scope>
    <scope>DOMAIN</scope>
</reference>
<gene>
    <name evidence="5" type="primary">yadA</name>
    <name evidence="7" type="synonym">yopA</name>
    <name type="ordered locus">YEP0066</name>
</gene>
<accession>A1JUB7</accession>
<accession>Q56930</accession>
<accession>Q84GR6</accession>
<accession>Q93KR4</accession>
<geneLocation type="plasmid">
    <name>pYVe8081</name>
</geneLocation>
<organism>
    <name type="scientific">Yersinia enterocolitica serotype O:8 / biotype 1B (strain NCTC 13174 / 8081)</name>
    <dbReference type="NCBI Taxonomy" id="393305"/>
    <lineage>
        <taxon>Bacteria</taxon>
        <taxon>Pseudomonadati</taxon>
        <taxon>Pseudomonadota</taxon>
        <taxon>Gammaproteobacteria</taxon>
        <taxon>Enterobacterales</taxon>
        <taxon>Yersiniaceae</taxon>
        <taxon>Yersinia</taxon>
    </lineage>
</organism>
<protein>
    <recommendedName>
        <fullName>Adhesin YadA</fullName>
    </recommendedName>
    <alternativeName>
        <fullName evidence="7">Protein Yop1</fullName>
    </alternativeName>
    <alternativeName>
        <fullName evidence="6">Trimeric autotransporter adhesin YadA</fullName>
        <shortName evidence="6">TAA YadA</shortName>
    </alternativeName>
    <alternativeName>
        <fullName>Type 5 secretion system autotransporter YadA</fullName>
    </alternativeName>
</protein>
<proteinExistence type="evidence at protein level"/>